<evidence type="ECO:0000255" key="1">
    <source>
        <dbReference type="HAMAP-Rule" id="MF_00195"/>
    </source>
</evidence>
<organism>
    <name type="scientific">Lachnoclostridium phytofermentans (strain ATCC 700394 / DSM 18823 / ISDg)</name>
    <name type="common">Clostridium phytofermentans</name>
    <dbReference type="NCBI Taxonomy" id="357809"/>
    <lineage>
        <taxon>Bacteria</taxon>
        <taxon>Bacillati</taxon>
        <taxon>Bacillota</taxon>
        <taxon>Clostridia</taxon>
        <taxon>Lachnospirales</taxon>
        <taxon>Lachnospiraceae</taxon>
    </lineage>
</organism>
<dbReference type="EMBL" id="CP000885">
    <property type="protein sequence ID" value="ABX42751.1"/>
    <property type="molecule type" value="Genomic_DNA"/>
</dbReference>
<dbReference type="RefSeq" id="WP_012200405.1">
    <property type="nucleotide sequence ID" value="NC_010001.1"/>
</dbReference>
<dbReference type="SMR" id="A9KLK7"/>
<dbReference type="STRING" id="357809.Cphy_2390"/>
<dbReference type="KEGG" id="cpy:Cphy_2390"/>
<dbReference type="eggNOG" id="COG1160">
    <property type="taxonomic scope" value="Bacteria"/>
</dbReference>
<dbReference type="HOGENOM" id="CLU_016077_6_2_9"/>
<dbReference type="OrthoDB" id="9805918at2"/>
<dbReference type="Proteomes" id="UP000000370">
    <property type="component" value="Chromosome"/>
</dbReference>
<dbReference type="GO" id="GO:0016887">
    <property type="term" value="F:ATP hydrolysis activity"/>
    <property type="evidence" value="ECO:0007669"/>
    <property type="project" value="InterPro"/>
</dbReference>
<dbReference type="GO" id="GO:0005525">
    <property type="term" value="F:GTP binding"/>
    <property type="evidence" value="ECO:0007669"/>
    <property type="project" value="UniProtKB-UniRule"/>
</dbReference>
<dbReference type="GO" id="GO:0043022">
    <property type="term" value="F:ribosome binding"/>
    <property type="evidence" value="ECO:0007669"/>
    <property type="project" value="TreeGrafter"/>
</dbReference>
<dbReference type="GO" id="GO:0042254">
    <property type="term" value="P:ribosome biogenesis"/>
    <property type="evidence" value="ECO:0007669"/>
    <property type="project" value="UniProtKB-KW"/>
</dbReference>
<dbReference type="CDD" id="cd01894">
    <property type="entry name" value="EngA1"/>
    <property type="match status" value="1"/>
</dbReference>
<dbReference type="CDD" id="cd01895">
    <property type="entry name" value="EngA2"/>
    <property type="match status" value="1"/>
</dbReference>
<dbReference type="FunFam" id="3.30.300.20:FF:000004">
    <property type="entry name" value="GTPase Der"/>
    <property type="match status" value="1"/>
</dbReference>
<dbReference type="FunFam" id="3.40.50.300:FF:000040">
    <property type="entry name" value="GTPase Der"/>
    <property type="match status" value="1"/>
</dbReference>
<dbReference type="FunFam" id="3.40.50.300:FF:000057">
    <property type="entry name" value="GTPase Der"/>
    <property type="match status" value="1"/>
</dbReference>
<dbReference type="Gene3D" id="3.30.300.20">
    <property type="match status" value="1"/>
</dbReference>
<dbReference type="Gene3D" id="3.40.50.300">
    <property type="entry name" value="P-loop containing nucleotide triphosphate hydrolases"/>
    <property type="match status" value="2"/>
</dbReference>
<dbReference type="HAMAP" id="MF_00195">
    <property type="entry name" value="GTPase_Der"/>
    <property type="match status" value="1"/>
</dbReference>
<dbReference type="InterPro" id="IPR003593">
    <property type="entry name" value="AAA+_ATPase"/>
</dbReference>
<dbReference type="InterPro" id="IPR031166">
    <property type="entry name" value="G_ENGA"/>
</dbReference>
<dbReference type="InterPro" id="IPR006073">
    <property type="entry name" value="GTP-bd"/>
</dbReference>
<dbReference type="InterPro" id="IPR016484">
    <property type="entry name" value="GTPase_Der"/>
</dbReference>
<dbReference type="InterPro" id="IPR032859">
    <property type="entry name" value="KH_dom-like"/>
</dbReference>
<dbReference type="InterPro" id="IPR015946">
    <property type="entry name" value="KH_dom-like_a/b"/>
</dbReference>
<dbReference type="InterPro" id="IPR027417">
    <property type="entry name" value="P-loop_NTPase"/>
</dbReference>
<dbReference type="InterPro" id="IPR005225">
    <property type="entry name" value="Small_GTP-bd"/>
</dbReference>
<dbReference type="NCBIfam" id="TIGR03594">
    <property type="entry name" value="GTPase_EngA"/>
    <property type="match status" value="1"/>
</dbReference>
<dbReference type="NCBIfam" id="TIGR00231">
    <property type="entry name" value="small_GTP"/>
    <property type="match status" value="2"/>
</dbReference>
<dbReference type="PANTHER" id="PTHR43834">
    <property type="entry name" value="GTPASE DER"/>
    <property type="match status" value="1"/>
</dbReference>
<dbReference type="PANTHER" id="PTHR43834:SF6">
    <property type="entry name" value="GTPASE DER"/>
    <property type="match status" value="1"/>
</dbReference>
<dbReference type="Pfam" id="PF14714">
    <property type="entry name" value="KH_dom-like"/>
    <property type="match status" value="1"/>
</dbReference>
<dbReference type="Pfam" id="PF01926">
    <property type="entry name" value="MMR_HSR1"/>
    <property type="match status" value="2"/>
</dbReference>
<dbReference type="PIRSF" id="PIRSF006485">
    <property type="entry name" value="GTP-binding_EngA"/>
    <property type="match status" value="1"/>
</dbReference>
<dbReference type="PRINTS" id="PR00326">
    <property type="entry name" value="GTP1OBG"/>
</dbReference>
<dbReference type="SMART" id="SM00382">
    <property type="entry name" value="AAA"/>
    <property type="match status" value="2"/>
</dbReference>
<dbReference type="SUPFAM" id="SSF52540">
    <property type="entry name" value="P-loop containing nucleoside triphosphate hydrolases"/>
    <property type="match status" value="2"/>
</dbReference>
<dbReference type="PROSITE" id="PS51712">
    <property type="entry name" value="G_ENGA"/>
    <property type="match status" value="2"/>
</dbReference>
<sequence length="441" mass="49526">MSKSIVAVVGRPNVGKSTLFNALAGDRISIVKDTPGVTRDRIYADITWLDKQFTLVDTGGIEPESKDMMLTYMREQAEIAIATADVIMFVVDVRQGLLDADNKVADMLRRSGKPVILVVNKVDNFDKFMPDVYEFYNLGIGDPVPVSAASMLGFGDLLDLVVGHFPPEALEEEEDERPRIAIVGKPNVGKSSIINKLLGENRVIVSDVAGTTRDAIDTAVTWNKKDYVFIDTAGLRRKSKIKEELERFSIIRTVSAVERADVVVVVIDANEGVTEQDAKIAGIAHERGKGIIIAVNKWDAIEKDDKTIYKYTNRIREILSFLPYAEIMFLSAKTGQRVTKLFDSIEVVIQNRNLRISTGVLNEIMMEATALQQPPSDKGKRLRLYYITQVAVKPPTFVIFVNDKELMHYSYTRYIENKIREAFGFSGTSLKFFIRERKEND</sequence>
<keyword id="KW-0342">GTP-binding</keyword>
<keyword id="KW-0547">Nucleotide-binding</keyword>
<keyword id="KW-1185">Reference proteome</keyword>
<keyword id="KW-0677">Repeat</keyword>
<keyword id="KW-0690">Ribosome biogenesis</keyword>
<proteinExistence type="inferred from homology"/>
<protein>
    <recommendedName>
        <fullName evidence="1">GTPase Der</fullName>
    </recommendedName>
    <alternativeName>
        <fullName evidence="1">GTP-binding protein EngA</fullName>
    </alternativeName>
</protein>
<gene>
    <name evidence="1" type="primary">der</name>
    <name type="synonym">engA</name>
    <name type="ordered locus">Cphy_2390</name>
</gene>
<feature type="chain" id="PRO_1000077654" description="GTPase Der">
    <location>
        <begin position="1"/>
        <end position="441"/>
    </location>
</feature>
<feature type="domain" description="EngA-type G 1">
    <location>
        <begin position="4"/>
        <end position="169"/>
    </location>
</feature>
<feature type="domain" description="EngA-type G 2">
    <location>
        <begin position="178"/>
        <end position="353"/>
    </location>
</feature>
<feature type="domain" description="KH-like" evidence="1">
    <location>
        <begin position="354"/>
        <end position="438"/>
    </location>
</feature>
<feature type="binding site" evidence="1">
    <location>
        <begin position="10"/>
        <end position="17"/>
    </location>
    <ligand>
        <name>GTP</name>
        <dbReference type="ChEBI" id="CHEBI:37565"/>
        <label>1</label>
    </ligand>
</feature>
<feature type="binding site" evidence="1">
    <location>
        <begin position="57"/>
        <end position="61"/>
    </location>
    <ligand>
        <name>GTP</name>
        <dbReference type="ChEBI" id="CHEBI:37565"/>
        <label>1</label>
    </ligand>
</feature>
<feature type="binding site" evidence="1">
    <location>
        <begin position="120"/>
        <end position="123"/>
    </location>
    <ligand>
        <name>GTP</name>
        <dbReference type="ChEBI" id="CHEBI:37565"/>
        <label>1</label>
    </ligand>
</feature>
<feature type="binding site" evidence="1">
    <location>
        <begin position="184"/>
        <end position="191"/>
    </location>
    <ligand>
        <name>GTP</name>
        <dbReference type="ChEBI" id="CHEBI:37565"/>
        <label>2</label>
    </ligand>
</feature>
<feature type="binding site" evidence="1">
    <location>
        <begin position="231"/>
        <end position="235"/>
    </location>
    <ligand>
        <name>GTP</name>
        <dbReference type="ChEBI" id="CHEBI:37565"/>
        <label>2</label>
    </ligand>
</feature>
<feature type="binding site" evidence="1">
    <location>
        <begin position="296"/>
        <end position="299"/>
    </location>
    <ligand>
        <name>GTP</name>
        <dbReference type="ChEBI" id="CHEBI:37565"/>
        <label>2</label>
    </ligand>
</feature>
<comment type="function">
    <text evidence="1">GTPase that plays an essential role in the late steps of ribosome biogenesis.</text>
</comment>
<comment type="subunit">
    <text evidence="1">Associates with the 50S ribosomal subunit.</text>
</comment>
<comment type="similarity">
    <text evidence="1">Belongs to the TRAFAC class TrmE-Era-EngA-EngB-Septin-like GTPase superfamily. EngA (Der) GTPase family.</text>
</comment>
<accession>A9KLK7</accession>
<name>DER_LACP7</name>
<reference key="1">
    <citation type="submission" date="2007-11" db="EMBL/GenBank/DDBJ databases">
        <title>Complete genome sequence of Clostridium phytofermentans ISDg.</title>
        <authorList>
            <person name="Leschine S.B."/>
            <person name="Warnick T.A."/>
            <person name="Blanchard J.L."/>
            <person name="Schnell D.J."/>
            <person name="Petit E.L."/>
            <person name="LaTouf W.G."/>
            <person name="Copeland A."/>
            <person name="Lucas S."/>
            <person name="Lapidus A."/>
            <person name="Barry K."/>
            <person name="Glavina del Rio T."/>
            <person name="Dalin E."/>
            <person name="Tice H."/>
            <person name="Pitluck S."/>
            <person name="Kiss H."/>
            <person name="Brettin T."/>
            <person name="Bruce D."/>
            <person name="Detter J.C."/>
            <person name="Han C."/>
            <person name="Kuske C."/>
            <person name="Schmutz J."/>
            <person name="Larimer F."/>
            <person name="Land M."/>
            <person name="Hauser L."/>
            <person name="Kyrpides N."/>
            <person name="Kim E.A."/>
            <person name="Richardson P."/>
        </authorList>
    </citation>
    <scope>NUCLEOTIDE SEQUENCE [LARGE SCALE GENOMIC DNA]</scope>
    <source>
        <strain>ATCC 700394 / DSM 18823 / ISDg</strain>
    </source>
</reference>